<dbReference type="EMBL" id="CP000024">
    <property type="protein sequence ID" value="AAV62422.1"/>
    <property type="molecule type" value="Genomic_DNA"/>
</dbReference>
<dbReference type="RefSeq" id="WP_011227119.1">
    <property type="nucleotide sequence ID" value="NC_006449.1"/>
</dbReference>
<dbReference type="SMR" id="Q5M058"/>
<dbReference type="KEGG" id="stc:str0831"/>
<dbReference type="HOGENOM" id="CLU_059558_0_0_9"/>
<dbReference type="GO" id="GO:0005524">
    <property type="term" value="F:ATP binding"/>
    <property type="evidence" value="ECO:0007669"/>
    <property type="project" value="UniProtKB-UniRule"/>
</dbReference>
<dbReference type="GO" id="GO:0005525">
    <property type="term" value="F:GTP binding"/>
    <property type="evidence" value="ECO:0007669"/>
    <property type="project" value="UniProtKB-UniRule"/>
</dbReference>
<dbReference type="Gene3D" id="3.40.50.300">
    <property type="entry name" value="P-loop containing nucleotide triphosphate hydrolases"/>
    <property type="match status" value="1"/>
</dbReference>
<dbReference type="HAMAP" id="MF_00636">
    <property type="entry name" value="RapZ_like"/>
    <property type="match status" value="1"/>
</dbReference>
<dbReference type="InterPro" id="IPR027417">
    <property type="entry name" value="P-loop_NTPase"/>
</dbReference>
<dbReference type="InterPro" id="IPR005337">
    <property type="entry name" value="RapZ-like"/>
</dbReference>
<dbReference type="InterPro" id="IPR053930">
    <property type="entry name" value="RapZ-like_N"/>
</dbReference>
<dbReference type="InterPro" id="IPR053931">
    <property type="entry name" value="RapZ_C"/>
</dbReference>
<dbReference type="NCBIfam" id="NF003828">
    <property type="entry name" value="PRK05416.1"/>
    <property type="match status" value="1"/>
</dbReference>
<dbReference type="PANTHER" id="PTHR30448">
    <property type="entry name" value="RNASE ADAPTER PROTEIN RAPZ"/>
    <property type="match status" value="1"/>
</dbReference>
<dbReference type="PANTHER" id="PTHR30448:SF0">
    <property type="entry name" value="RNASE ADAPTER PROTEIN RAPZ"/>
    <property type="match status" value="1"/>
</dbReference>
<dbReference type="Pfam" id="PF22740">
    <property type="entry name" value="PapZ_C"/>
    <property type="match status" value="1"/>
</dbReference>
<dbReference type="Pfam" id="PF03668">
    <property type="entry name" value="RapZ-like_N"/>
    <property type="match status" value="1"/>
</dbReference>
<dbReference type="PIRSF" id="PIRSF005052">
    <property type="entry name" value="P-loopkin"/>
    <property type="match status" value="1"/>
</dbReference>
<dbReference type="SUPFAM" id="SSF52540">
    <property type="entry name" value="P-loop containing nucleoside triphosphate hydrolases"/>
    <property type="match status" value="1"/>
</dbReference>
<comment type="function">
    <text evidence="1">Displays ATPase and GTPase activities.</text>
</comment>
<comment type="similarity">
    <text evidence="1">Belongs to the RapZ-like family.</text>
</comment>
<gene>
    <name type="ordered locus">str0831</name>
</gene>
<keyword id="KW-0067">ATP-binding</keyword>
<keyword id="KW-0342">GTP-binding</keyword>
<keyword id="KW-0547">Nucleotide-binding</keyword>
<sequence>MKTKIINLVVVTGMSGAGKTVAIQSFEDIGYFTIDNIPPSLVPKVIELLKHSEETDKIALVVDMRSRVFFDEINDILDQLESNEKLNFKILFLDATDGELVSRYKETRRSHPLAADGRVLDGIKLERELLSPLKSLSQNVVDTTKLTPRQLRKAISEQFSSKQDQSSFRIEVLSFGFKYGLPLDADLVFDVRFLPNPYYDPTLRNLTGLDKEVYDFVMTHKESEDFYKNLNHLIKPILPGYQKEGKSVLTIAVGCTGGQHRSVAFAHRLAQDLKNDWTVNETHRDKDRRKETVNRS</sequence>
<reference key="1">
    <citation type="journal article" date="2004" name="Nat. Biotechnol.">
        <title>Complete sequence and comparative genome analysis of the dairy bacterium Streptococcus thermophilus.</title>
        <authorList>
            <person name="Bolotin A."/>
            <person name="Quinquis B."/>
            <person name="Renault P."/>
            <person name="Sorokin A."/>
            <person name="Ehrlich S.D."/>
            <person name="Kulakauskas S."/>
            <person name="Lapidus A."/>
            <person name="Goltsman E."/>
            <person name="Mazur M."/>
            <person name="Pusch G.D."/>
            <person name="Fonstein M."/>
            <person name="Overbeek R."/>
            <person name="Kyprides N."/>
            <person name="Purnelle B."/>
            <person name="Prozzi D."/>
            <person name="Ngui K."/>
            <person name="Masuy D."/>
            <person name="Hancy F."/>
            <person name="Burteau S."/>
            <person name="Boutry M."/>
            <person name="Delcour J."/>
            <person name="Goffeau A."/>
            <person name="Hols P."/>
        </authorList>
    </citation>
    <scope>NUCLEOTIDE SEQUENCE [LARGE SCALE GENOMIC DNA]</scope>
    <source>
        <strain>CNRZ 1066</strain>
    </source>
</reference>
<accession>Q5M058</accession>
<organism>
    <name type="scientific">Streptococcus thermophilus (strain CNRZ 1066)</name>
    <dbReference type="NCBI Taxonomy" id="299768"/>
    <lineage>
        <taxon>Bacteria</taxon>
        <taxon>Bacillati</taxon>
        <taxon>Bacillota</taxon>
        <taxon>Bacilli</taxon>
        <taxon>Lactobacillales</taxon>
        <taxon>Streptococcaceae</taxon>
        <taxon>Streptococcus</taxon>
    </lineage>
</organism>
<evidence type="ECO:0000255" key="1">
    <source>
        <dbReference type="HAMAP-Rule" id="MF_00636"/>
    </source>
</evidence>
<name>Y831_STRT1</name>
<proteinExistence type="inferred from homology"/>
<protein>
    <recommendedName>
        <fullName evidence="1">Nucleotide-binding protein str0831</fullName>
    </recommendedName>
</protein>
<feature type="chain" id="PRO_0000107776" description="Nucleotide-binding protein str0831">
    <location>
        <begin position="1"/>
        <end position="296"/>
    </location>
</feature>
<feature type="binding site" evidence="1">
    <location>
        <begin position="13"/>
        <end position="20"/>
    </location>
    <ligand>
        <name>ATP</name>
        <dbReference type="ChEBI" id="CHEBI:30616"/>
    </ligand>
</feature>
<feature type="binding site" evidence="1">
    <location>
        <begin position="63"/>
        <end position="66"/>
    </location>
    <ligand>
        <name>GTP</name>
        <dbReference type="ChEBI" id="CHEBI:37565"/>
    </ligand>
</feature>